<sequence>MSQEFLARILEQKAREVEQMKLEQIQPLRQTYRLAEFLKNHQDRLQVIAEVKKASPSLGDINLDVDIVQQAQTYEENGAVMISVLTDEVFFKGHLDYLREISSQVEIPTLNKDFIIDEKQIIRARNAGATVILLIVAALSEERLKELYDYATELGLEVLVETHNLAELEVAHRLGAEIIGVNNRNLTTFEVDLQTSVDLAPYFEEGRYYISESAIFTGQDAERLAPYFNGILVGTALMQAENVAQRIKELQIDKG</sequence>
<accession>C1CMD5</accession>
<keyword id="KW-0028">Amino-acid biosynthesis</keyword>
<keyword id="KW-0057">Aromatic amino acid biosynthesis</keyword>
<keyword id="KW-0210">Decarboxylase</keyword>
<keyword id="KW-0456">Lyase</keyword>
<keyword id="KW-0822">Tryptophan biosynthesis</keyword>
<organism>
    <name type="scientific">Streptococcus pneumoniae (strain P1031)</name>
    <dbReference type="NCBI Taxonomy" id="488223"/>
    <lineage>
        <taxon>Bacteria</taxon>
        <taxon>Bacillati</taxon>
        <taxon>Bacillota</taxon>
        <taxon>Bacilli</taxon>
        <taxon>Lactobacillales</taxon>
        <taxon>Streptococcaceae</taxon>
        <taxon>Streptococcus</taxon>
    </lineage>
</organism>
<name>TRPC_STRZP</name>
<gene>
    <name evidence="1" type="primary">trpC</name>
    <name type="ordered locus">SPP_1822</name>
</gene>
<reference key="1">
    <citation type="journal article" date="2010" name="Genome Biol.">
        <title>Structure and dynamics of the pan-genome of Streptococcus pneumoniae and closely related species.</title>
        <authorList>
            <person name="Donati C."/>
            <person name="Hiller N.L."/>
            <person name="Tettelin H."/>
            <person name="Muzzi A."/>
            <person name="Croucher N.J."/>
            <person name="Angiuoli S.V."/>
            <person name="Oggioni M."/>
            <person name="Dunning Hotopp J.C."/>
            <person name="Hu F.Z."/>
            <person name="Riley D.R."/>
            <person name="Covacci A."/>
            <person name="Mitchell T.J."/>
            <person name="Bentley S.D."/>
            <person name="Kilian M."/>
            <person name="Ehrlich G.D."/>
            <person name="Rappuoli R."/>
            <person name="Moxon E.R."/>
            <person name="Masignani V."/>
        </authorList>
    </citation>
    <scope>NUCLEOTIDE SEQUENCE [LARGE SCALE GENOMIC DNA]</scope>
    <source>
        <strain>P1031</strain>
    </source>
</reference>
<dbReference type="EC" id="4.1.1.48" evidence="1"/>
<dbReference type="EMBL" id="CP000920">
    <property type="protein sequence ID" value="ACO21684.1"/>
    <property type="molecule type" value="Genomic_DNA"/>
</dbReference>
<dbReference type="RefSeq" id="WP_000076548.1">
    <property type="nucleotide sequence ID" value="NC_012467.1"/>
</dbReference>
<dbReference type="SMR" id="C1CMD5"/>
<dbReference type="KEGG" id="spp:SPP_1822"/>
<dbReference type="HOGENOM" id="CLU_034247_2_1_9"/>
<dbReference type="UniPathway" id="UPA00035">
    <property type="reaction ID" value="UER00043"/>
</dbReference>
<dbReference type="GO" id="GO:0004425">
    <property type="term" value="F:indole-3-glycerol-phosphate synthase activity"/>
    <property type="evidence" value="ECO:0007669"/>
    <property type="project" value="UniProtKB-UniRule"/>
</dbReference>
<dbReference type="GO" id="GO:0004640">
    <property type="term" value="F:phosphoribosylanthranilate isomerase activity"/>
    <property type="evidence" value="ECO:0007669"/>
    <property type="project" value="TreeGrafter"/>
</dbReference>
<dbReference type="GO" id="GO:0000162">
    <property type="term" value="P:L-tryptophan biosynthetic process"/>
    <property type="evidence" value="ECO:0007669"/>
    <property type="project" value="UniProtKB-UniRule"/>
</dbReference>
<dbReference type="CDD" id="cd00331">
    <property type="entry name" value="IGPS"/>
    <property type="match status" value="1"/>
</dbReference>
<dbReference type="FunFam" id="3.20.20.70:FF:000024">
    <property type="entry name" value="Indole-3-glycerol phosphate synthase"/>
    <property type="match status" value="1"/>
</dbReference>
<dbReference type="Gene3D" id="3.20.20.70">
    <property type="entry name" value="Aldolase class I"/>
    <property type="match status" value="1"/>
</dbReference>
<dbReference type="HAMAP" id="MF_00134_B">
    <property type="entry name" value="IGPS_B"/>
    <property type="match status" value="1"/>
</dbReference>
<dbReference type="InterPro" id="IPR013785">
    <property type="entry name" value="Aldolase_TIM"/>
</dbReference>
<dbReference type="InterPro" id="IPR045186">
    <property type="entry name" value="Indole-3-glycerol_P_synth"/>
</dbReference>
<dbReference type="InterPro" id="IPR013798">
    <property type="entry name" value="Indole-3-glycerol_P_synth_dom"/>
</dbReference>
<dbReference type="InterPro" id="IPR001468">
    <property type="entry name" value="Indole-3-GlycerolPSynthase_CS"/>
</dbReference>
<dbReference type="InterPro" id="IPR011060">
    <property type="entry name" value="RibuloseP-bd_barrel"/>
</dbReference>
<dbReference type="NCBIfam" id="NF001371">
    <property type="entry name" value="PRK00278.1-3"/>
    <property type="match status" value="1"/>
</dbReference>
<dbReference type="NCBIfam" id="NF001377">
    <property type="entry name" value="PRK00278.2-4"/>
    <property type="match status" value="1"/>
</dbReference>
<dbReference type="PANTHER" id="PTHR22854:SF2">
    <property type="entry name" value="INDOLE-3-GLYCEROL-PHOSPHATE SYNTHASE"/>
    <property type="match status" value="1"/>
</dbReference>
<dbReference type="PANTHER" id="PTHR22854">
    <property type="entry name" value="TRYPTOPHAN BIOSYNTHESIS PROTEIN"/>
    <property type="match status" value="1"/>
</dbReference>
<dbReference type="Pfam" id="PF00218">
    <property type="entry name" value="IGPS"/>
    <property type="match status" value="1"/>
</dbReference>
<dbReference type="SUPFAM" id="SSF51366">
    <property type="entry name" value="Ribulose-phoshate binding barrel"/>
    <property type="match status" value="1"/>
</dbReference>
<dbReference type="PROSITE" id="PS00614">
    <property type="entry name" value="IGPS"/>
    <property type="match status" value="1"/>
</dbReference>
<proteinExistence type="inferred from homology"/>
<protein>
    <recommendedName>
        <fullName evidence="1">Indole-3-glycerol phosphate synthase</fullName>
        <shortName evidence="1">IGPS</shortName>
        <ecNumber evidence="1">4.1.1.48</ecNumber>
    </recommendedName>
</protein>
<feature type="chain" id="PRO_1000198790" description="Indole-3-glycerol phosphate synthase">
    <location>
        <begin position="1"/>
        <end position="255"/>
    </location>
</feature>
<evidence type="ECO:0000255" key="1">
    <source>
        <dbReference type="HAMAP-Rule" id="MF_00134"/>
    </source>
</evidence>
<comment type="catalytic activity">
    <reaction evidence="1">
        <text>1-(2-carboxyphenylamino)-1-deoxy-D-ribulose 5-phosphate + H(+) = (1S,2R)-1-C-(indol-3-yl)glycerol 3-phosphate + CO2 + H2O</text>
        <dbReference type="Rhea" id="RHEA:23476"/>
        <dbReference type="ChEBI" id="CHEBI:15377"/>
        <dbReference type="ChEBI" id="CHEBI:15378"/>
        <dbReference type="ChEBI" id="CHEBI:16526"/>
        <dbReference type="ChEBI" id="CHEBI:58613"/>
        <dbReference type="ChEBI" id="CHEBI:58866"/>
        <dbReference type="EC" id="4.1.1.48"/>
    </reaction>
</comment>
<comment type="pathway">
    <text evidence="1">Amino-acid biosynthesis; L-tryptophan biosynthesis; L-tryptophan from chorismate: step 4/5.</text>
</comment>
<comment type="similarity">
    <text evidence="1">Belongs to the TrpC family.</text>
</comment>